<name>KAD_MOOTA</name>
<organism>
    <name type="scientific">Moorella thermoacetica (strain ATCC 39073 / JCM 9320)</name>
    <dbReference type="NCBI Taxonomy" id="264732"/>
    <lineage>
        <taxon>Bacteria</taxon>
        <taxon>Bacillati</taxon>
        <taxon>Bacillota</taxon>
        <taxon>Clostridia</taxon>
        <taxon>Moorellales</taxon>
        <taxon>Moorellaceae</taxon>
        <taxon>Moorella</taxon>
    </lineage>
</organism>
<feature type="chain" id="PRO_1000021746" description="Adenylate kinase">
    <location>
        <begin position="1"/>
        <end position="217"/>
    </location>
</feature>
<feature type="region of interest" description="NMP" evidence="1">
    <location>
        <begin position="30"/>
        <end position="59"/>
    </location>
</feature>
<feature type="region of interest" description="LID" evidence="1">
    <location>
        <begin position="126"/>
        <end position="163"/>
    </location>
</feature>
<feature type="binding site" evidence="1">
    <location>
        <begin position="10"/>
        <end position="15"/>
    </location>
    <ligand>
        <name>ATP</name>
        <dbReference type="ChEBI" id="CHEBI:30616"/>
    </ligand>
</feature>
<feature type="binding site" evidence="1">
    <location>
        <position position="31"/>
    </location>
    <ligand>
        <name>AMP</name>
        <dbReference type="ChEBI" id="CHEBI:456215"/>
    </ligand>
</feature>
<feature type="binding site" evidence="1">
    <location>
        <position position="36"/>
    </location>
    <ligand>
        <name>AMP</name>
        <dbReference type="ChEBI" id="CHEBI:456215"/>
    </ligand>
</feature>
<feature type="binding site" evidence="1">
    <location>
        <begin position="57"/>
        <end position="59"/>
    </location>
    <ligand>
        <name>AMP</name>
        <dbReference type="ChEBI" id="CHEBI:456215"/>
    </ligand>
</feature>
<feature type="binding site" evidence="1">
    <location>
        <begin position="85"/>
        <end position="88"/>
    </location>
    <ligand>
        <name>AMP</name>
        <dbReference type="ChEBI" id="CHEBI:456215"/>
    </ligand>
</feature>
<feature type="binding site" evidence="1">
    <location>
        <position position="92"/>
    </location>
    <ligand>
        <name>AMP</name>
        <dbReference type="ChEBI" id="CHEBI:456215"/>
    </ligand>
</feature>
<feature type="binding site" evidence="1">
    <location>
        <position position="127"/>
    </location>
    <ligand>
        <name>ATP</name>
        <dbReference type="ChEBI" id="CHEBI:30616"/>
    </ligand>
</feature>
<feature type="binding site" evidence="1">
    <location>
        <position position="130"/>
    </location>
    <ligand>
        <name>Zn(2+)</name>
        <dbReference type="ChEBI" id="CHEBI:29105"/>
        <note>structural</note>
    </ligand>
</feature>
<feature type="binding site" evidence="1">
    <location>
        <position position="133"/>
    </location>
    <ligand>
        <name>Zn(2+)</name>
        <dbReference type="ChEBI" id="CHEBI:29105"/>
        <note>structural</note>
    </ligand>
</feature>
<feature type="binding site" evidence="1">
    <location>
        <begin position="136"/>
        <end position="137"/>
    </location>
    <ligand>
        <name>ATP</name>
        <dbReference type="ChEBI" id="CHEBI:30616"/>
    </ligand>
</feature>
<feature type="binding site" evidence="1">
    <location>
        <position position="150"/>
    </location>
    <ligand>
        <name>Zn(2+)</name>
        <dbReference type="ChEBI" id="CHEBI:29105"/>
        <note>structural</note>
    </ligand>
</feature>
<feature type="binding site" evidence="1">
    <location>
        <position position="153"/>
    </location>
    <ligand>
        <name>Zn(2+)</name>
        <dbReference type="ChEBI" id="CHEBI:29105"/>
        <note>structural</note>
    </ligand>
</feature>
<feature type="binding site" evidence="1">
    <location>
        <position position="160"/>
    </location>
    <ligand>
        <name>AMP</name>
        <dbReference type="ChEBI" id="CHEBI:456215"/>
    </ligand>
</feature>
<feature type="binding site" evidence="1">
    <location>
        <position position="171"/>
    </location>
    <ligand>
        <name>AMP</name>
        <dbReference type="ChEBI" id="CHEBI:456215"/>
    </ligand>
</feature>
<feature type="binding site" evidence="1">
    <location>
        <position position="199"/>
    </location>
    <ligand>
        <name>ATP</name>
        <dbReference type="ChEBI" id="CHEBI:30616"/>
    </ligand>
</feature>
<accession>Q2RFR8</accession>
<reference key="1">
    <citation type="journal article" date="2008" name="Environ. Microbiol.">
        <title>The complete genome sequence of Moorella thermoacetica (f. Clostridium thermoaceticum).</title>
        <authorList>
            <person name="Pierce E."/>
            <person name="Xie G."/>
            <person name="Barabote R.D."/>
            <person name="Saunders E."/>
            <person name="Han C.S."/>
            <person name="Detter J.C."/>
            <person name="Richardson P."/>
            <person name="Brettin T.S."/>
            <person name="Das A."/>
            <person name="Ljungdahl L.G."/>
            <person name="Ragsdale S.W."/>
        </authorList>
    </citation>
    <scope>NUCLEOTIDE SEQUENCE [LARGE SCALE GENOMIC DNA]</scope>
    <source>
        <strain>ATCC 39073 / JCM 9320</strain>
    </source>
</reference>
<dbReference type="EC" id="2.7.4.3" evidence="1"/>
<dbReference type="EMBL" id="CP000232">
    <property type="protein sequence ID" value="ABC20721.1"/>
    <property type="molecule type" value="Genomic_DNA"/>
</dbReference>
<dbReference type="RefSeq" id="YP_431264.1">
    <property type="nucleotide sequence ID" value="NC_007644.1"/>
</dbReference>
<dbReference type="SMR" id="Q2RFR8"/>
<dbReference type="STRING" id="264732.Moth_2439"/>
<dbReference type="EnsemblBacteria" id="ABC20721">
    <property type="protein sequence ID" value="ABC20721"/>
    <property type="gene ID" value="Moth_2439"/>
</dbReference>
<dbReference type="KEGG" id="mta:Moth_2439"/>
<dbReference type="PATRIC" id="fig|264732.11.peg.2657"/>
<dbReference type="eggNOG" id="COG0563">
    <property type="taxonomic scope" value="Bacteria"/>
</dbReference>
<dbReference type="HOGENOM" id="CLU_032354_1_2_9"/>
<dbReference type="OrthoDB" id="9805030at2"/>
<dbReference type="UniPathway" id="UPA00588">
    <property type="reaction ID" value="UER00649"/>
</dbReference>
<dbReference type="GO" id="GO:0005737">
    <property type="term" value="C:cytoplasm"/>
    <property type="evidence" value="ECO:0007669"/>
    <property type="project" value="UniProtKB-SubCell"/>
</dbReference>
<dbReference type="GO" id="GO:0004017">
    <property type="term" value="F:adenylate kinase activity"/>
    <property type="evidence" value="ECO:0007669"/>
    <property type="project" value="UniProtKB-UniRule"/>
</dbReference>
<dbReference type="GO" id="GO:0005524">
    <property type="term" value="F:ATP binding"/>
    <property type="evidence" value="ECO:0007669"/>
    <property type="project" value="UniProtKB-UniRule"/>
</dbReference>
<dbReference type="GO" id="GO:0008270">
    <property type="term" value="F:zinc ion binding"/>
    <property type="evidence" value="ECO:0007669"/>
    <property type="project" value="UniProtKB-UniRule"/>
</dbReference>
<dbReference type="GO" id="GO:0044209">
    <property type="term" value="P:AMP salvage"/>
    <property type="evidence" value="ECO:0007669"/>
    <property type="project" value="UniProtKB-UniRule"/>
</dbReference>
<dbReference type="CDD" id="cd01428">
    <property type="entry name" value="ADK"/>
    <property type="match status" value="1"/>
</dbReference>
<dbReference type="FunFam" id="3.40.50.300:FF:000106">
    <property type="entry name" value="Adenylate kinase mitochondrial"/>
    <property type="match status" value="1"/>
</dbReference>
<dbReference type="Gene3D" id="3.40.50.300">
    <property type="entry name" value="P-loop containing nucleotide triphosphate hydrolases"/>
    <property type="match status" value="1"/>
</dbReference>
<dbReference type="HAMAP" id="MF_00235">
    <property type="entry name" value="Adenylate_kinase_Adk"/>
    <property type="match status" value="1"/>
</dbReference>
<dbReference type="InterPro" id="IPR006259">
    <property type="entry name" value="Adenyl_kin_sub"/>
</dbReference>
<dbReference type="InterPro" id="IPR000850">
    <property type="entry name" value="Adenylat/UMP-CMP_kin"/>
</dbReference>
<dbReference type="InterPro" id="IPR033690">
    <property type="entry name" value="Adenylat_kinase_CS"/>
</dbReference>
<dbReference type="InterPro" id="IPR007862">
    <property type="entry name" value="Adenylate_kinase_lid-dom"/>
</dbReference>
<dbReference type="InterPro" id="IPR027417">
    <property type="entry name" value="P-loop_NTPase"/>
</dbReference>
<dbReference type="NCBIfam" id="TIGR01351">
    <property type="entry name" value="adk"/>
    <property type="match status" value="1"/>
</dbReference>
<dbReference type="NCBIfam" id="NF001380">
    <property type="entry name" value="PRK00279.1-2"/>
    <property type="match status" value="1"/>
</dbReference>
<dbReference type="NCBIfam" id="NF001381">
    <property type="entry name" value="PRK00279.1-3"/>
    <property type="match status" value="1"/>
</dbReference>
<dbReference type="NCBIfam" id="NF011100">
    <property type="entry name" value="PRK14527.1"/>
    <property type="match status" value="1"/>
</dbReference>
<dbReference type="PANTHER" id="PTHR23359">
    <property type="entry name" value="NUCLEOTIDE KINASE"/>
    <property type="match status" value="1"/>
</dbReference>
<dbReference type="Pfam" id="PF00406">
    <property type="entry name" value="ADK"/>
    <property type="match status" value="1"/>
</dbReference>
<dbReference type="Pfam" id="PF05191">
    <property type="entry name" value="ADK_lid"/>
    <property type="match status" value="1"/>
</dbReference>
<dbReference type="PRINTS" id="PR00094">
    <property type="entry name" value="ADENYLTKNASE"/>
</dbReference>
<dbReference type="SUPFAM" id="SSF52540">
    <property type="entry name" value="P-loop containing nucleoside triphosphate hydrolases"/>
    <property type="match status" value="1"/>
</dbReference>
<dbReference type="PROSITE" id="PS00113">
    <property type="entry name" value="ADENYLATE_KINASE"/>
    <property type="match status" value="1"/>
</dbReference>
<proteinExistence type="inferred from homology"/>
<gene>
    <name evidence="1" type="primary">adk</name>
    <name type="ordered locus">Moth_2439</name>
</gene>
<protein>
    <recommendedName>
        <fullName evidence="1">Adenylate kinase</fullName>
        <shortName evidence="1">AK</shortName>
        <ecNumber evidence="1">2.7.4.3</ecNumber>
    </recommendedName>
    <alternativeName>
        <fullName evidence="1">ATP-AMP transphosphorylase</fullName>
    </alternativeName>
    <alternativeName>
        <fullName evidence="1">ATP:AMP phosphotransferase</fullName>
    </alternativeName>
    <alternativeName>
        <fullName evidence="1">Adenylate monophosphate kinase</fullName>
    </alternativeName>
</protein>
<evidence type="ECO:0000255" key="1">
    <source>
        <dbReference type="HAMAP-Rule" id="MF_00235"/>
    </source>
</evidence>
<keyword id="KW-0067">ATP-binding</keyword>
<keyword id="KW-0963">Cytoplasm</keyword>
<keyword id="KW-0418">Kinase</keyword>
<keyword id="KW-0479">Metal-binding</keyword>
<keyword id="KW-0545">Nucleotide biosynthesis</keyword>
<keyword id="KW-0547">Nucleotide-binding</keyword>
<keyword id="KW-0808">Transferase</keyword>
<keyword id="KW-0862">Zinc</keyword>
<sequence>MRLVLLGPPGAGKGTQAREINQRLAIPHISTGDMFREAIKRGTPLGRQAEVYIKGGRLVPDEVTIGLVQERLVQPDCRNGFLLDGFPRTVAQAEALDSWLSSRGERLDAVIDIEVPRDALLERLTGRRVCRQCGATYHVRYNPPAVPGKCDACGQDLVQRADDTEATVNKRLDVYNEQTAPLVNYYRQRGLLKEIDGSQAIPAVILAIGRALGRDWQ</sequence>
<comment type="function">
    <text evidence="1">Catalyzes the reversible transfer of the terminal phosphate group between ATP and AMP. Plays an important role in cellular energy homeostasis and in adenine nucleotide metabolism.</text>
</comment>
<comment type="catalytic activity">
    <reaction evidence="1">
        <text>AMP + ATP = 2 ADP</text>
        <dbReference type="Rhea" id="RHEA:12973"/>
        <dbReference type="ChEBI" id="CHEBI:30616"/>
        <dbReference type="ChEBI" id="CHEBI:456215"/>
        <dbReference type="ChEBI" id="CHEBI:456216"/>
        <dbReference type="EC" id="2.7.4.3"/>
    </reaction>
</comment>
<comment type="pathway">
    <text evidence="1">Purine metabolism; AMP biosynthesis via salvage pathway; AMP from ADP: step 1/1.</text>
</comment>
<comment type="subunit">
    <text evidence="1">Monomer.</text>
</comment>
<comment type="subcellular location">
    <subcellularLocation>
        <location evidence="1">Cytoplasm</location>
    </subcellularLocation>
</comment>
<comment type="domain">
    <text evidence="1">Consists of three domains, a large central CORE domain and two small peripheral domains, NMPbind and LID, which undergo movements during catalysis. The LID domain closes over the site of phosphoryl transfer upon ATP binding. Assembling and dissambling the active center during each catalytic cycle provides an effective means to prevent ATP hydrolysis. Some bacteria have evolved a zinc-coordinating structure that stabilizes the LID domain.</text>
</comment>
<comment type="similarity">
    <text evidence="1">Belongs to the adenylate kinase family.</text>
</comment>